<accession>Q86QV2</accession>
<feature type="chain" id="PRO_0000066848" description="Potassium channel toxin gamma-KTx 3.4">
    <location>
        <begin position="1"/>
        <end position="42"/>
    </location>
</feature>
<feature type="disulfide bond" evidence="3">
    <location>
        <begin position="5"/>
        <end position="23"/>
    </location>
</feature>
<feature type="disulfide bond" evidence="3">
    <location>
        <begin position="11"/>
        <end position="34"/>
    </location>
</feature>
<feature type="disulfide bond" evidence="3">
    <location>
        <begin position="20"/>
        <end position="39"/>
    </location>
</feature>
<feature type="disulfide bond" evidence="3">
    <location>
        <begin position="24"/>
        <end position="41"/>
    </location>
</feature>
<proteinExistence type="inferred from homology"/>
<name>KGX34_CENGR</name>
<evidence type="ECO:0000250" key="1"/>
<evidence type="ECO:0000250" key="2">
    <source>
        <dbReference type="UniProtKB" id="P59939"/>
    </source>
</evidence>
<evidence type="ECO:0000250" key="3">
    <source>
        <dbReference type="UniProtKB" id="Q86QT3"/>
    </source>
</evidence>
<evidence type="ECO:0000303" key="4">
    <source>
    </source>
</evidence>
<evidence type="ECO:0000305" key="5"/>
<sequence>DRDSCVDKSRCQKYGNYAQCTACCKKAGHNKGTCDFFKCKCT</sequence>
<dbReference type="EMBL" id="AY159341">
    <property type="protein sequence ID" value="AAO22219.1"/>
    <property type="molecule type" value="mRNA"/>
</dbReference>
<dbReference type="SMR" id="Q86QV2"/>
<dbReference type="GO" id="GO:0005576">
    <property type="term" value="C:extracellular region"/>
    <property type="evidence" value="ECO:0007669"/>
    <property type="project" value="UniProtKB-SubCell"/>
</dbReference>
<dbReference type="GO" id="GO:0019870">
    <property type="term" value="F:potassium channel inhibitor activity"/>
    <property type="evidence" value="ECO:0007669"/>
    <property type="project" value="InterPro"/>
</dbReference>
<dbReference type="GO" id="GO:0090729">
    <property type="term" value="F:toxin activity"/>
    <property type="evidence" value="ECO:0007669"/>
    <property type="project" value="UniProtKB-KW"/>
</dbReference>
<dbReference type="Gene3D" id="3.30.30.10">
    <property type="entry name" value="Knottin, scorpion toxin-like"/>
    <property type="match status" value="1"/>
</dbReference>
<dbReference type="InterPro" id="IPR012622">
    <property type="entry name" value="Ergtoxin"/>
</dbReference>
<dbReference type="InterPro" id="IPR036574">
    <property type="entry name" value="Scorpion_toxin-like_sf"/>
</dbReference>
<dbReference type="Pfam" id="PF08086">
    <property type="entry name" value="Toxin_17"/>
    <property type="match status" value="1"/>
</dbReference>
<dbReference type="SUPFAM" id="SSF57095">
    <property type="entry name" value="Scorpion toxin-like"/>
    <property type="match status" value="1"/>
</dbReference>
<dbReference type="PROSITE" id="PS60026">
    <property type="entry name" value="ERGTX"/>
    <property type="match status" value="1"/>
</dbReference>
<keyword id="KW-1015">Disulfide bond</keyword>
<keyword id="KW-0872">Ion channel impairing toxin</keyword>
<keyword id="KW-0960">Knottin</keyword>
<keyword id="KW-0528">Neurotoxin</keyword>
<keyword id="KW-0632">Potassium channel impairing toxin</keyword>
<keyword id="KW-0964">Secreted</keyword>
<keyword id="KW-0800">Toxin</keyword>
<keyword id="KW-1220">Voltage-gated potassium channel impairing toxin</keyword>
<comment type="function">
    <text evidence="2">Blocks Kv11/ERG potassium channels.</text>
</comment>
<comment type="subcellular location">
    <subcellularLocation>
        <location evidence="2">Secreted</location>
    </subcellularLocation>
</comment>
<comment type="tissue specificity">
    <text evidence="5">Expressed by the venom gland.</text>
</comment>
<comment type="domain">
    <text evidence="1">The presence of a 'disulfide through disulfide knot' structurally defines this protein as a knottin.</text>
</comment>
<comment type="domain">
    <text evidence="3">Has the CSalpha/beta fold, which comprises one or two short alpha helices connected to anti-parallel beta-sheets stabilized by three or four disulfide bonds.</text>
</comment>
<comment type="similarity">
    <text evidence="5">Belongs to the ergtoxin family. Gamma-KTx 3 subfamily.</text>
</comment>
<organism>
    <name type="scientific">Centruroides gracilis</name>
    <name type="common">Slenderbrown scorpion</name>
    <name type="synonym">Florida bark scorpion</name>
    <dbReference type="NCBI Taxonomy" id="217898"/>
    <lineage>
        <taxon>Eukaryota</taxon>
        <taxon>Metazoa</taxon>
        <taxon>Ecdysozoa</taxon>
        <taxon>Arthropoda</taxon>
        <taxon>Chelicerata</taxon>
        <taxon>Arachnida</taxon>
        <taxon>Scorpiones</taxon>
        <taxon>Buthida</taxon>
        <taxon>Buthoidea</taxon>
        <taxon>Buthidae</taxon>
        <taxon>Centruroides</taxon>
    </lineage>
</organism>
<reference key="1">
    <citation type="journal article" date="2002" name="FEBS Lett.">
        <title>A large number of novel Ergtoxin-like genes and ERG K+-channels blocking peptides from scorpions of the genus Centruroides.</title>
        <authorList>
            <person name="Corona M."/>
            <person name="Gurrola G.B."/>
            <person name="Merino E."/>
            <person name="Cassulini R.R."/>
            <person name="Valdez-Cruz N.A."/>
            <person name="Garcia B."/>
            <person name="Ramirez-Dominguez M.E."/>
            <person name="Coronas F.I."/>
            <person name="Zamudio F.Z."/>
            <person name="Wanke E."/>
            <person name="Possani L.D."/>
        </authorList>
    </citation>
    <scope>NUCLEOTIDE SEQUENCE [MRNA]</scope>
    <scope>NOMENCLATURE</scope>
    <source>
        <tissue>Venom gland</tissue>
    </source>
</reference>
<protein>
    <recommendedName>
        <fullName evidence="4">Potassium channel toxin gamma-KTx 3.4</fullName>
    </recommendedName>
    <alternativeName>
        <fullName evidence="5">CgErgTx2</fullName>
        <shortName evidence="4">CgErg2</shortName>
        <shortName evidence="4">ErgTx2</shortName>
    </alternativeName>
    <alternativeName>
        <fullName evidence="4">Ergtoxin-like protein</fullName>
    </alternativeName>
</protein>